<comment type="subunit">
    <text evidence="4">Component of the small ribosomal subunit (SSU) (Ref.8).</text>
</comment>
<comment type="miscellaneous">
    <text evidence="4">Initially thought to be part of the large ribosomal subunit. Crystal structures show eS32/eL41 to be a small ribosomal subunit forming a bridge at the interface of the 2 subunits.</text>
</comment>
<comment type="similarity">
    <text evidence="3">Belongs to the eukaryotic ribosomal protein eS32 family.</text>
</comment>
<name>RS32_ARATH</name>
<dbReference type="EMBL" id="AC009894">
    <property type="protein sequence ID" value="AAF02845.1"/>
    <property type="molecule type" value="Genomic_DNA"/>
</dbReference>
<dbReference type="EMBL" id="AC074395">
    <property type="protein sequence ID" value="AAG50829.1"/>
    <property type="molecule type" value="Genomic_DNA"/>
</dbReference>
<dbReference type="EMBL" id="AC009991">
    <property type="protein sequence ID" value="AAF01511.1"/>
    <property type="molecule type" value="Genomic_DNA"/>
</dbReference>
<dbReference type="EMBL" id="AC073395">
    <property type="status" value="NOT_ANNOTATED_CDS"/>
    <property type="molecule type" value="Genomic_DNA"/>
</dbReference>
<dbReference type="EMBL" id="AL163832">
    <property type="protein sequence ID" value="CAB87856.1"/>
    <property type="molecule type" value="Genomic_DNA"/>
</dbReference>
<dbReference type="EMBL" id="CP002684">
    <property type="protein sequence ID" value="AEE33335.1"/>
    <property type="molecule type" value="Genomic_DNA"/>
</dbReference>
<dbReference type="EMBL" id="CP002685">
    <property type="protein sequence ID" value="AEC09796.1"/>
    <property type="molecule type" value="Genomic_DNA"/>
</dbReference>
<dbReference type="EMBL" id="CP002686">
    <property type="protein sequence ID" value="AEE74643.1"/>
    <property type="molecule type" value="Genomic_DNA"/>
</dbReference>
<dbReference type="EMBL" id="CP002686">
    <property type="protein sequence ID" value="AEE75004.1"/>
    <property type="molecule type" value="Genomic_DNA"/>
</dbReference>
<dbReference type="EMBL" id="CP002686">
    <property type="protein sequence ID" value="AEE79467.1"/>
    <property type="molecule type" value="Genomic_DNA"/>
</dbReference>
<dbReference type="EMBL" id="AY136332">
    <property type="protein sequence ID" value="AAM96998.1"/>
    <property type="molecule type" value="mRNA"/>
</dbReference>
<dbReference type="EMBL" id="BT002078">
    <property type="protein sequence ID" value="AAN72089.1"/>
    <property type="molecule type" value="mRNA"/>
</dbReference>
<dbReference type="EMBL" id="AY062780">
    <property type="protein sequence ID" value="AAL32858.1"/>
    <property type="molecule type" value="mRNA"/>
</dbReference>
<dbReference type="EMBL" id="AY081623">
    <property type="protein sequence ID" value="AAM10185.1"/>
    <property type="molecule type" value="mRNA"/>
</dbReference>
<dbReference type="EMBL" id="AY058053">
    <property type="protein sequence ID" value="AAL24161.1"/>
    <property type="molecule type" value="mRNA"/>
</dbReference>
<dbReference type="EMBL" id="AY098947">
    <property type="protein sequence ID" value="AAM19957.1"/>
    <property type="molecule type" value="mRNA"/>
</dbReference>
<dbReference type="EMBL" id="BT004288">
    <property type="protein sequence ID" value="AAO42288.1"/>
    <property type="molecule type" value="mRNA"/>
</dbReference>
<dbReference type="EMBL" id="BT005635">
    <property type="protein sequence ID" value="AAO64055.1"/>
    <property type="molecule type" value="mRNA"/>
</dbReference>
<dbReference type="PIR" id="T49214">
    <property type="entry name" value="T49214"/>
</dbReference>
<dbReference type="RefSeq" id="NP_187465.1">
    <property type="nucleotide sequence ID" value="NM_111687.2"/>
</dbReference>
<dbReference type="RefSeq" id="NP_187723.1">
    <property type="nucleotide sequence ID" value="NM_111949.3"/>
</dbReference>
<dbReference type="RefSeq" id="NP_191161.1">
    <property type="nucleotide sequence ID" value="NM_115460.3"/>
</dbReference>
<dbReference type="RefSeq" id="NP_850328.1">
    <property type="nucleotide sequence ID" value="NM_179997.2"/>
</dbReference>
<dbReference type="RefSeq" id="NP_974039.1">
    <property type="nucleotide sequence ID" value="NM_202310.2"/>
</dbReference>
<dbReference type="PDB" id="8R6F">
    <property type="method" value="EM"/>
    <property type="resolution" value="2.34 A"/>
    <property type="chains" value="n=1-25"/>
</dbReference>
<dbReference type="PDBsum" id="8R6F"/>
<dbReference type="EMDB" id="EMD-18951"/>
<dbReference type="SMR" id="P62120"/>
<dbReference type="FunCoup" id="P62120">
    <property type="interactions" value="5"/>
</dbReference>
<dbReference type="STRING" id="3702.P62120"/>
<dbReference type="EnsemblPlants" id="AT1G56045.1">
    <property type="protein sequence ID" value="AT1G56045.1"/>
    <property type="gene ID" value="AT1G56045"/>
</dbReference>
<dbReference type="EnsemblPlants" id="AT2G40205.1">
    <property type="protein sequence ID" value="AT2G40205.1"/>
    <property type="gene ID" value="AT2G40205"/>
</dbReference>
<dbReference type="EnsemblPlants" id="AT3G08520.1">
    <property type="protein sequence ID" value="AT3G08520.1"/>
    <property type="gene ID" value="AT3G08520"/>
</dbReference>
<dbReference type="EnsemblPlants" id="AT3G11120.1">
    <property type="protein sequence ID" value="AT3G11120.1"/>
    <property type="gene ID" value="AT3G11120"/>
</dbReference>
<dbReference type="EnsemblPlants" id="AT3G56020.1">
    <property type="protein sequence ID" value="AT3G56020.1"/>
    <property type="gene ID" value="AT3G56020"/>
</dbReference>
<dbReference type="GeneID" id="2745833"/>
<dbReference type="GeneID" id="818612"/>
<dbReference type="GeneID" id="820000"/>
<dbReference type="GeneID" id="820283"/>
<dbReference type="GeneID" id="824768"/>
<dbReference type="Gramene" id="AT1G56045.1">
    <property type="protein sequence ID" value="AT1G56045.1"/>
    <property type="gene ID" value="AT1G56045"/>
</dbReference>
<dbReference type="Gramene" id="AT2G40205.1">
    <property type="protein sequence ID" value="AT2G40205.1"/>
    <property type="gene ID" value="AT2G40205"/>
</dbReference>
<dbReference type="Gramene" id="AT3G08520.1">
    <property type="protein sequence ID" value="AT3G08520.1"/>
    <property type="gene ID" value="AT3G08520"/>
</dbReference>
<dbReference type="Gramene" id="AT3G11120.1">
    <property type="protein sequence ID" value="AT3G11120.1"/>
    <property type="gene ID" value="AT3G11120"/>
</dbReference>
<dbReference type="Gramene" id="AT3G56020.1">
    <property type="protein sequence ID" value="AT3G56020.1"/>
    <property type="gene ID" value="AT3G56020"/>
</dbReference>
<dbReference type="KEGG" id="ath:AT1G56045"/>
<dbReference type="KEGG" id="ath:AT2G40205"/>
<dbReference type="KEGG" id="ath:AT3G08520"/>
<dbReference type="KEGG" id="ath:AT3G11120"/>
<dbReference type="KEGG" id="ath:AT3G56020"/>
<dbReference type="Araport" id="AT1G56045"/>
<dbReference type="Araport" id="AT2G40205"/>
<dbReference type="Araport" id="AT3G08520"/>
<dbReference type="Araport" id="AT3G11120"/>
<dbReference type="Araport" id="AT3G56020"/>
<dbReference type="TAIR" id="AT1G56045"/>
<dbReference type="TAIR" id="AT2G40205"/>
<dbReference type="TAIR" id="AT3G08520"/>
<dbReference type="TAIR" id="AT3G11120"/>
<dbReference type="TAIR" id="AT3G56020"/>
<dbReference type="eggNOG" id="ENOG502SD55">
    <property type="taxonomic scope" value="Eukaryota"/>
</dbReference>
<dbReference type="HOGENOM" id="CLU_220499_1_0_1"/>
<dbReference type="InParanoid" id="P62120"/>
<dbReference type="PRO" id="PR:P62120"/>
<dbReference type="Proteomes" id="UP000006548">
    <property type="component" value="Chromosome 1"/>
</dbReference>
<dbReference type="Proteomes" id="UP000006548">
    <property type="component" value="Chromosome 2"/>
</dbReference>
<dbReference type="Proteomes" id="UP000006548">
    <property type="component" value="Chromosome 3"/>
</dbReference>
<dbReference type="ExpressionAtlas" id="P62120">
    <property type="expression patterns" value="baseline and differential"/>
</dbReference>
<dbReference type="GO" id="GO:1990904">
    <property type="term" value="C:ribonucleoprotein complex"/>
    <property type="evidence" value="ECO:0007669"/>
    <property type="project" value="UniProtKB-KW"/>
</dbReference>
<dbReference type="GO" id="GO:0005840">
    <property type="term" value="C:ribosome"/>
    <property type="evidence" value="ECO:0007669"/>
    <property type="project" value="UniProtKB-KW"/>
</dbReference>
<dbReference type="GO" id="GO:0003735">
    <property type="term" value="F:structural constituent of ribosome"/>
    <property type="evidence" value="ECO:0007669"/>
    <property type="project" value="InterPro"/>
</dbReference>
<dbReference type="GO" id="GO:0006412">
    <property type="term" value="P:translation"/>
    <property type="evidence" value="ECO:0007669"/>
    <property type="project" value="InterPro"/>
</dbReference>
<dbReference type="InterPro" id="IPR007836">
    <property type="entry name" value="Ribosomal_eS32"/>
</dbReference>
<dbReference type="Pfam" id="PF05162">
    <property type="entry name" value="Ribosomal_L41"/>
    <property type="match status" value="1"/>
</dbReference>
<organism>
    <name type="scientific">Arabidopsis thaliana</name>
    <name type="common">Mouse-ear cress</name>
    <dbReference type="NCBI Taxonomy" id="3702"/>
    <lineage>
        <taxon>Eukaryota</taxon>
        <taxon>Viridiplantae</taxon>
        <taxon>Streptophyta</taxon>
        <taxon>Embryophyta</taxon>
        <taxon>Tracheophyta</taxon>
        <taxon>Spermatophyta</taxon>
        <taxon>Magnoliopsida</taxon>
        <taxon>eudicotyledons</taxon>
        <taxon>Gunneridae</taxon>
        <taxon>Pentapetalae</taxon>
        <taxon>rosids</taxon>
        <taxon>malvids</taxon>
        <taxon>Brassicales</taxon>
        <taxon>Brassicaceae</taxon>
        <taxon>Camelineae</taxon>
        <taxon>Arabidopsis</taxon>
    </lineage>
</organism>
<feature type="chain" id="PRO_0000198063" description="Small ribosomal subunit protein eS32 eS32z/eS32y/eS32x/eS32w/eS32v">
    <location>
        <begin position="1"/>
        <end position="25"/>
    </location>
</feature>
<feature type="region of interest" description="Disordered" evidence="1">
    <location>
        <begin position="1"/>
        <end position="25"/>
    </location>
</feature>
<feature type="helix" evidence="5">
    <location>
        <begin position="3"/>
        <end position="21"/>
    </location>
</feature>
<protein>
    <recommendedName>
        <fullName evidence="4">Small ribosomal subunit protein eS32 eS32z/eS32y/eS32x/eS32w/eS32v</fullName>
    </recommendedName>
    <alternativeName>
        <fullName>60S ribosomal protein L41</fullName>
    </alternativeName>
    <alternativeName>
        <fullName evidence="2">Large ribosomal subunit protein eL41z/eL41y/eL41x/eL41w/eL41v</fullName>
    </alternativeName>
</protein>
<sequence length="25" mass="3428">MRAKWKKKRMRRLKRKRRKMRQRSK</sequence>
<accession>P62120</accession>
<accession>P35015</accession>
<gene>
    <name type="primary">RPL41A</name>
    <name type="ordered locus">At1g56045</name>
    <name type="ORF">T6H22.15</name>
</gene>
<gene>
    <name type="primary">RPL41C</name>
    <name type="ordered locus">At2g40205</name>
    <name type="ORF">T7M7.26</name>
</gene>
<gene>
    <name type="primary">RPL41D</name>
    <name type="ordered locus">At3g08520</name>
    <name type="ORF">T8G24.5</name>
</gene>
<gene>
    <name type="primary">RPL41E</name>
    <name type="ordered locus">At3g11120</name>
    <name type="ORF">F11B9.31</name>
    <name type="ORF">F9F8.7</name>
</gene>
<gene>
    <name type="primary">RPL41G</name>
    <name type="ordered locus">At3g56020</name>
    <name type="ORF">F27K19_200</name>
</gene>
<proteinExistence type="evidence at protein level"/>
<keyword id="KW-0002">3D-structure</keyword>
<keyword id="KW-1185">Reference proteome</keyword>
<keyword id="KW-0687">Ribonucleoprotein</keyword>
<keyword id="KW-0689">Ribosomal protein</keyword>
<evidence type="ECO:0000256" key="1">
    <source>
        <dbReference type="SAM" id="MobiDB-lite"/>
    </source>
</evidence>
<evidence type="ECO:0000303" key="2">
    <source>
    </source>
</evidence>
<evidence type="ECO:0000305" key="3"/>
<evidence type="ECO:0000305" key="4">
    <source ref="8"/>
</evidence>
<evidence type="ECO:0007829" key="5">
    <source>
        <dbReference type="PDB" id="8R6F"/>
    </source>
</evidence>
<reference key="1">
    <citation type="journal article" date="2000" name="Nature">
        <title>Sequence and analysis of chromosome 1 of the plant Arabidopsis thaliana.</title>
        <authorList>
            <person name="Theologis A."/>
            <person name="Ecker J.R."/>
            <person name="Palm C.J."/>
            <person name="Federspiel N.A."/>
            <person name="Kaul S."/>
            <person name="White O."/>
            <person name="Alonso J."/>
            <person name="Altafi H."/>
            <person name="Araujo R."/>
            <person name="Bowman C.L."/>
            <person name="Brooks S.Y."/>
            <person name="Buehler E."/>
            <person name="Chan A."/>
            <person name="Chao Q."/>
            <person name="Chen H."/>
            <person name="Cheuk R.F."/>
            <person name="Chin C.W."/>
            <person name="Chung M.K."/>
            <person name="Conn L."/>
            <person name="Conway A.B."/>
            <person name="Conway A.R."/>
            <person name="Creasy T.H."/>
            <person name="Dewar K."/>
            <person name="Dunn P."/>
            <person name="Etgu P."/>
            <person name="Feldblyum T.V."/>
            <person name="Feng J.-D."/>
            <person name="Fong B."/>
            <person name="Fujii C.Y."/>
            <person name="Gill J.E."/>
            <person name="Goldsmith A.D."/>
            <person name="Haas B."/>
            <person name="Hansen N.F."/>
            <person name="Hughes B."/>
            <person name="Huizar L."/>
            <person name="Hunter J.L."/>
            <person name="Jenkins J."/>
            <person name="Johnson-Hopson C."/>
            <person name="Khan S."/>
            <person name="Khaykin E."/>
            <person name="Kim C.J."/>
            <person name="Koo H.L."/>
            <person name="Kremenetskaia I."/>
            <person name="Kurtz D.B."/>
            <person name="Kwan A."/>
            <person name="Lam B."/>
            <person name="Langin-Hooper S."/>
            <person name="Lee A."/>
            <person name="Lee J.M."/>
            <person name="Lenz C.A."/>
            <person name="Li J.H."/>
            <person name="Li Y.-P."/>
            <person name="Lin X."/>
            <person name="Liu S.X."/>
            <person name="Liu Z.A."/>
            <person name="Luros J.S."/>
            <person name="Maiti R."/>
            <person name="Marziali A."/>
            <person name="Militscher J."/>
            <person name="Miranda M."/>
            <person name="Nguyen M."/>
            <person name="Nierman W.C."/>
            <person name="Osborne B.I."/>
            <person name="Pai G."/>
            <person name="Peterson J."/>
            <person name="Pham P.K."/>
            <person name="Rizzo M."/>
            <person name="Rooney T."/>
            <person name="Rowley D."/>
            <person name="Sakano H."/>
            <person name="Salzberg S.L."/>
            <person name="Schwartz J.R."/>
            <person name="Shinn P."/>
            <person name="Southwick A.M."/>
            <person name="Sun H."/>
            <person name="Tallon L.J."/>
            <person name="Tambunga G."/>
            <person name="Toriumi M.J."/>
            <person name="Town C.D."/>
            <person name="Utterback T."/>
            <person name="Van Aken S."/>
            <person name="Vaysberg M."/>
            <person name="Vysotskaia V.S."/>
            <person name="Walker M."/>
            <person name="Wu D."/>
            <person name="Yu G."/>
            <person name="Fraser C.M."/>
            <person name="Venter J.C."/>
            <person name="Davis R.W."/>
        </authorList>
    </citation>
    <scope>NUCLEOTIDE SEQUENCE [LARGE SCALE GENOMIC DNA] (AT1G56045)</scope>
    <source>
        <strain>cv. Columbia</strain>
    </source>
</reference>
<reference key="2">
    <citation type="journal article" date="1999" name="Nature">
        <title>Sequence and analysis of chromosome 2 of the plant Arabidopsis thaliana.</title>
        <authorList>
            <person name="Lin X."/>
            <person name="Kaul S."/>
            <person name="Rounsley S.D."/>
            <person name="Shea T.P."/>
            <person name="Benito M.-I."/>
            <person name="Town C.D."/>
            <person name="Fujii C.Y."/>
            <person name="Mason T.M."/>
            <person name="Bowman C.L."/>
            <person name="Barnstead M.E."/>
            <person name="Feldblyum T.V."/>
            <person name="Buell C.R."/>
            <person name="Ketchum K.A."/>
            <person name="Lee J.J."/>
            <person name="Ronning C.M."/>
            <person name="Koo H.L."/>
            <person name="Moffat K.S."/>
            <person name="Cronin L.A."/>
            <person name="Shen M."/>
            <person name="Pai G."/>
            <person name="Van Aken S."/>
            <person name="Umayam L."/>
            <person name="Tallon L.J."/>
            <person name="Gill J.E."/>
            <person name="Adams M.D."/>
            <person name="Carrera A.J."/>
            <person name="Creasy T.H."/>
            <person name="Goodman H.M."/>
            <person name="Somerville C.R."/>
            <person name="Copenhaver G.P."/>
            <person name="Preuss D."/>
            <person name="Nierman W.C."/>
            <person name="White O."/>
            <person name="Eisen J.A."/>
            <person name="Salzberg S.L."/>
            <person name="Fraser C.M."/>
            <person name="Venter J.C."/>
        </authorList>
    </citation>
    <scope>NUCLEOTIDE SEQUENCE [LARGE SCALE GENOMIC DNA] (AT2G40205)</scope>
    <source>
        <strain>cv. Columbia</strain>
    </source>
</reference>
<reference key="3">
    <citation type="journal article" date="2000" name="Nature">
        <title>Sequence and analysis of chromosome 3 of the plant Arabidopsis thaliana.</title>
        <authorList>
            <person name="Salanoubat M."/>
            <person name="Lemcke K."/>
            <person name="Rieger M."/>
            <person name="Ansorge W."/>
            <person name="Unseld M."/>
            <person name="Fartmann B."/>
            <person name="Valle G."/>
            <person name="Bloecker H."/>
            <person name="Perez-Alonso M."/>
            <person name="Obermaier B."/>
            <person name="Delseny M."/>
            <person name="Boutry M."/>
            <person name="Grivell L.A."/>
            <person name="Mache R."/>
            <person name="Puigdomenech P."/>
            <person name="De Simone V."/>
            <person name="Choisne N."/>
            <person name="Artiguenave F."/>
            <person name="Robert C."/>
            <person name="Brottier P."/>
            <person name="Wincker P."/>
            <person name="Cattolico L."/>
            <person name="Weissenbach J."/>
            <person name="Saurin W."/>
            <person name="Quetier F."/>
            <person name="Schaefer M."/>
            <person name="Mueller-Auer S."/>
            <person name="Gabel C."/>
            <person name="Fuchs M."/>
            <person name="Benes V."/>
            <person name="Wurmbach E."/>
            <person name="Drzonek H."/>
            <person name="Erfle H."/>
            <person name="Jordan N."/>
            <person name="Bangert S."/>
            <person name="Wiedelmann R."/>
            <person name="Kranz H."/>
            <person name="Voss H."/>
            <person name="Holland R."/>
            <person name="Brandt P."/>
            <person name="Nyakatura G."/>
            <person name="Vezzi A."/>
            <person name="D'Angelo M."/>
            <person name="Pallavicini A."/>
            <person name="Toppo S."/>
            <person name="Simionati B."/>
            <person name="Conrad A."/>
            <person name="Hornischer K."/>
            <person name="Kauer G."/>
            <person name="Loehnert T.-H."/>
            <person name="Nordsiek G."/>
            <person name="Reichelt J."/>
            <person name="Scharfe M."/>
            <person name="Schoen O."/>
            <person name="Bargues M."/>
            <person name="Terol J."/>
            <person name="Climent J."/>
            <person name="Navarro P."/>
            <person name="Collado C."/>
            <person name="Perez-Perez A."/>
            <person name="Ottenwaelder B."/>
            <person name="Duchemin D."/>
            <person name="Cooke R."/>
            <person name="Laudie M."/>
            <person name="Berger-Llauro C."/>
            <person name="Purnelle B."/>
            <person name="Masuy D."/>
            <person name="de Haan M."/>
            <person name="Maarse A.C."/>
            <person name="Alcaraz J.-P."/>
            <person name="Cottet A."/>
            <person name="Casacuberta E."/>
            <person name="Monfort A."/>
            <person name="Argiriou A."/>
            <person name="Flores M."/>
            <person name="Liguori R."/>
            <person name="Vitale D."/>
            <person name="Mannhaupt G."/>
            <person name="Haase D."/>
            <person name="Schoof H."/>
            <person name="Rudd S."/>
            <person name="Zaccaria P."/>
            <person name="Mewes H.-W."/>
            <person name="Mayer K.F.X."/>
            <person name="Kaul S."/>
            <person name="Town C.D."/>
            <person name="Koo H.L."/>
            <person name="Tallon L.J."/>
            <person name="Jenkins J."/>
            <person name="Rooney T."/>
            <person name="Rizzo M."/>
            <person name="Walts A."/>
            <person name="Utterback T."/>
            <person name="Fujii C.Y."/>
            <person name="Shea T.P."/>
            <person name="Creasy T.H."/>
            <person name="Haas B."/>
            <person name="Maiti R."/>
            <person name="Wu D."/>
            <person name="Peterson J."/>
            <person name="Van Aken S."/>
            <person name="Pai G."/>
            <person name="Militscher J."/>
            <person name="Sellers P."/>
            <person name="Gill J.E."/>
            <person name="Feldblyum T.V."/>
            <person name="Preuss D."/>
            <person name="Lin X."/>
            <person name="Nierman W.C."/>
            <person name="Salzberg S.L."/>
            <person name="White O."/>
            <person name="Venter J.C."/>
            <person name="Fraser C.M."/>
            <person name="Kaneko T."/>
            <person name="Nakamura Y."/>
            <person name="Sato S."/>
            <person name="Kato T."/>
            <person name="Asamizu E."/>
            <person name="Sasamoto S."/>
            <person name="Kimura T."/>
            <person name="Idesawa K."/>
            <person name="Kawashima K."/>
            <person name="Kishida Y."/>
            <person name="Kiyokawa C."/>
            <person name="Kohara M."/>
            <person name="Matsumoto M."/>
            <person name="Matsuno A."/>
            <person name="Muraki A."/>
            <person name="Nakayama S."/>
            <person name="Nakazaki N."/>
            <person name="Shinpo S."/>
            <person name="Takeuchi C."/>
            <person name="Wada T."/>
            <person name="Watanabe A."/>
            <person name="Yamada M."/>
            <person name="Yasuda M."/>
            <person name="Tabata S."/>
        </authorList>
    </citation>
    <scope>NUCLEOTIDE SEQUENCE [LARGE SCALE GENOMIC DNA] (AT3G08520; AT3G11120 AND AT3G56020)</scope>
    <source>
        <strain>cv. Columbia</strain>
    </source>
</reference>
<reference key="4">
    <citation type="journal article" date="2017" name="Plant J.">
        <title>Araport11: a complete reannotation of the Arabidopsis thaliana reference genome.</title>
        <authorList>
            <person name="Cheng C.Y."/>
            <person name="Krishnakumar V."/>
            <person name="Chan A.P."/>
            <person name="Thibaud-Nissen F."/>
            <person name="Schobel S."/>
            <person name="Town C.D."/>
        </authorList>
    </citation>
    <scope>GENOME REANNOTATION</scope>
    <source>
        <strain>cv. Columbia</strain>
    </source>
</reference>
<reference key="5">
    <citation type="journal article" date="2003" name="Science">
        <title>Empirical analysis of transcriptional activity in the Arabidopsis genome.</title>
        <authorList>
            <person name="Yamada K."/>
            <person name="Lim J."/>
            <person name="Dale J.M."/>
            <person name="Chen H."/>
            <person name="Shinn P."/>
            <person name="Palm C.J."/>
            <person name="Southwick A.M."/>
            <person name="Wu H.C."/>
            <person name="Kim C.J."/>
            <person name="Nguyen M."/>
            <person name="Pham P.K."/>
            <person name="Cheuk R.F."/>
            <person name="Karlin-Newmann G."/>
            <person name="Liu S.X."/>
            <person name="Lam B."/>
            <person name="Sakano H."/>
            <person name="Wu T."/>
            <person name="Yu G."/>
            <person name="Miranda M."/>
            <person name="Quach H.L."/>
            <person name="Tripp M."/>
            <person name="Chang C.H."/>
            <person name="Lee J.M."/>
            <person name="Toriumi M.J."/>
            <person name="Chan M.M."/>
            <person name="Tang C.C."/>
            <person name="Onodera C.S."/>
            <person name="Deng J.M."/>
            <person name="Akiyama K."/>
            <person name="Ansari Y."/>
            <person name="Arakawa T."/>
            <person name="Banh J."/>
            <person name="Banno F."/>
            <person name="Bowser L."/>
            <person name="Brooks S.Y."/>
            <person name="Carninci P."/>
            <person name="Chao Q."/>
            <person name="Choy N."/>
            <person name="Enju A."/>
            <person name="Goldsmith A.D."/>
            <person name="Gurjal M."/>
            <person name="Hansen N.F."/>
            <person name="Hayashizaki Y."/>
            <person name="Johnson-Hopson C."/>
            <person name="Hsuan V.W."/>
            <person name="Iida K."/>
            <person name="Karnes M."/>
            <person name="Khan S."/>
            <person name="Koesema E."/>
            <person name="Ishida J."/>
            <person name="Jiang P.X."/>
            <person name="Jones T."/>
            <person name="Kawai J."/>
            <person name="Kamiya A."/>
            <person name="Meyers C."/>
            <person name="Nakajima M."/>
            <person name="Narusaka M."/>
            <person name="Seki M."/>
            <person name="Sakurai T."/>
            <person name="Satou M."/>
            <person name="Tamse R."/>
            <person name="Vaysberg M."/>
            <person name="Wallender E.K."/>
            <person name="Wong C."/>
            <person name="Yamamura Y."/>
            <person name="Yuan S."/>
            <person name="Shinozaki K."/>
            <person name="Davis R.W."/>
            <person name="Theologis A."/>
            <person name="Ecker J.R."/>
        </authorList>
    </citation>
    <scope>NUCLEOTIDE SEQUENCE [LARGE SCALE MRNA] (AT1G56045; AT2G40205; AT3G08520 AND AT3G11120)</scope>
    <source>
        <strain>cv. Columbia</strain>
    </source>
</reference>
<reference key="6">
    <citation type="journal article" date="2001" name="Plant Physiol.">
        <title>The organization of cytoplasmic ribosomal protein genes in the Arabidopsis genome.</title>
        <authorList>
            <person name="Barakat A."/>
            <person name="Szick-Miranda K."/>
            <person name="Chang I.-F."/>
            <person name="Guyot R."/>
            <person name="Blanc G."/>
            <person name="Cooke R."/>
            <person name="Delseny M."/>
            <person name="Bailey-Serres J."/>
        </authorList>
    </citation>
    <scope>GENE FAMILY ORGANIZATION</scope>
    <scope>NOMENCLATURE</scope>
</reference>
<reference key="7">
    <citation type="journal article" date="2023" name="Plant Cell">
        <title>An updated nomenclature for plant ribosomal protein genes.</title>
        <authorList>
            <person name="Scarpin M.R."/>
            <person name="Busche M."/>
            <person name="Martinez R.E."/>
            <person name="Harper L.C."/>
            <person name="Reiser L."/>
            <person name="Szakonyi D."/>
            <person name="Merchante C."/>
            <person name="Lan T."/>
            <person name="Xiong W."/>
            <person name="Mo B."/>
            <person name="Tang G."/>
            <person name="Chen X."/>
            <person name="Bailey-Serres J."/>
            <person name="Browning K.S."/>
            <person name="Brunkard J.O."/>
        </authorList>
    </citation>
    <scope>NOMENCLATURE</scope>
</reference>
<reference key="8">
    <citation type="unpublished observations" date="2023-10">
        <authorList>
            <person name="Leibundgut M.A."/>
            <person name="Ban N."/>
        </authorList>
    </citation>
    <scope>REVISION OF SUBUNIT</scope>
    <scope>NOMENCLATURE</scope>
</reference>